<protein>
    <recommendedName>
        <fullName>Forkhead box protein I1</fullName>
        <shortName>FoxI1</shortName>
    </recommendedName>
</protein>
<reference evidence="7" key="1">
    <citation type="submission" date="2006-03" db="EMBL/GenBank/DDBJ databases">
        <authorList>
            <consortium name="Sanger Xenopus tropicalis EST/cDNA project"/>
        </authorList>
    </citation>
    <scope>NUCLEOTIDE SEQUENCE [LARGE SCALE MRNA]</scope>
    <source>
        <tissue evidence="7">Gastrula</tissue>
    </source>
</reference>
<reference evidence="7" key="2">
    <citation type="submission" date="2003-12" db="EMBL/GenBank/DDBJ databases">
        <authorList>
            <consortium name="NIH - Xenopus Gene Collection (XGC) project"/>
        </authorList>
    </citation>
    <scope>NUCLEOTIDE SEQUENCE [LARGE SCALE MRNA]</scope>
    <source>
        <tissue evidence="6">Tail bud</tissue>
    </source>
</reference>
<organism>
    <name type="scientific">Xenopus tropicalis</name>
    <name type="common">Western clawed frog</name>
    <name type="synonym">Silurana tropicalis</name>
    <dbReference type="NCBI Taxonomy" id="8364"/>
    <lineage>
        <taxon>Eukaryota</taxon>
        <taxon>Metazoa</taxon>
        <taxon>Chordata</taxon>
        <taxon>Craniata</taxon>
        <taxon>Vertebrata</taxon>
        <taxon>Euteleostomi</taxon>
        <taxon>Amphibia</taxon>
        <taxon>Batrachia</taxon>
        <taxon>Anura</taxon>
        <taxon>Pipoidea</taxon>
        <taxon>Pipidae</taxon>
        <taxon>Xenopodinae</taxon>
        <taxon>Xenopus</taxon>
        <taxon>Silurana</taxon>
    </lineage>
</organism>
<evidence type="ECO:0000250" key="1"/>
<evidence type="ECO:0000255" key="2"/>
<evidence type="ECO:0000255" key="3">
    <source>
        <dbReference type="PROSITE-ProRule" id="PRU00089"/>
    </source>
</evidence>
<evidence type="ECO:0000256" key="4">
    <source>
        <dbReference type="SAM" id="MobiDB-lite"/>
    </source>
</evidence>
<evidence type="ECO:0000305" key="5"/>
<evidence type="ECO:0000312" key="6">
    <source>
        <dbReference type="EMBL" id="AAH64241.1"/>
    </source>
</evidence>
<evidence type="ECO:0000312" key="7">
    <source>
        <dbReference type="EMBL" id="CAJ81516.1"/>
    </source>
</evidence>
<name>FOXI1_XENTR</name>
<comment type="function">
    <text evidence="1">Transcription factor. Essential for ventral specification of the early cephalic (head) ectoderm during gastrulation, playing a role in the 'non-neural' versus 'neural' cell fate choice. Binds to DNA via the target sequence 5'-[AG]TAAA[CT]A-3', with 5'-ATAAACA-3' being the preferred binding site (By similarity).</text>
</comment>
<comment type="subcellular location">
    <subcellularLocation>
        <location evidence="2 5">Nucleus</location>
    </subcellularLocation>
</comment>
<dbReference type="EMBL" id="CR761756">
    <property type="protein sequence ID" value="CAJ81516.1"/>
    <property type="molecule type" value="mRNA"/>
</dbReference>
<dbReference type="EMBL" id="BC064241">
    <property type="protein sequence ID" value="AAH64241.1"/>
    <property type="molecule type" value="mRNA"/>
</dbReference>
<dbReference type="SMR" id="Q6P2Z3"/>
<dbReference type="STRING" id="8364.ENSXETP00000038186"/>
<dbReference type="PaxDb" id="8364-ENSXETP00000004118"/>
<dbReference type="DNASU" id="394878"/>
<dbReference type="KEGG" id="xtr:394878"/>
<dbReference type="AGR" id="Xenbase:XB-GENE-487658"/>
<dbReference type="CTD" id="394878"/>
<dbReference type="Xenbase" id="XB-GENE-487658">
    <property type="gene designation" value="foxi3.2"/>
</dbReference>
<dbReference type="eggNOG" id="KOG2294">
    <property type="taxonomic scope" value="Eukaryota"/>
</dbReference>
<dbReference type="HOGENOM" id="CLU_046860_0_0_1"/>
<dbReference type="InParanoid" id="Q6P2Z3"/>
<dbReference type="OMA" id="RQFMANS"/>
<dbReference type="OrthoDB" id="5402974at2759"/>
<dbReference type="PhylomeDB" id="Q6P2Z3"/>
<dbReference type="TreeFam" id="TF316127"/>
<dbReference type="Proteomes" id="UP000008143">
    <property type="component" value="Chromosome 1"/>
</dbReference>
<dbReference type="GO" id="GO:0005634">
    <property type="term" value="C:nucleus"/>
    <property type="evidence" value="ECO:0000250"/>
    <property type="project" value="UniProtKB"/>
</dbReference>
<dbReference type="GO" id="GO:0003700">
    <property type="term" value="F:DNA-binding transcription factor activity"/>
    <property type="evidence" value="ECO:0007669"/>
    <property type="project" value="InterPro"/>
</dbReference>
<dbReference type="GO" id="GO:0043565">
    <property type="term" value="F:sequence-specific DNA binding"/>
    <property type="evidence" value="ECO:0000250"/>
    <property type="project" value="UniProtKB"/>
</dbReference>
<dbReference type="GO" id="GO:0030154">
    <property type="term" value="P:cell differentiation"/>
    <property type="evidence" value="ECO:0007669"/>
    <property type="project" value="UniProtKB-KW"/>
</dbReference>
<dbReference type="GO" id="GO:0048264">
    <property type="term" value="P:determination of ventral identity"/>
    <property type="evidence" value="ECO:0000250"/>
    <property type="project" value="UniProtKB"/>
</dbReference>
<dbReference type="GO" id="GO:0007398">
    <property type="term" value="P:ectoderm development"/>
    <property type="evidence" value="ECO:0000250"/>
    <property type="project" value="UniProtKB"/>
</dbReference>
<dbReference type="GO" id="GO:0007399">
    <property type="term" value="P:nervous system development"/>
    <property type="evidence" value="ECO:0007669"/>
    <property type="project" value="UniProtKB-KW"/>
</dbReference>
<dbReference type="GO" id="GO:0045893">
    <property type="term" value="P:positive regulation of DNA-templated transcription"/>
    <property type="evidence" value="ECO:0000250"/>
    <property type="project" value="UniProtKB"/>
</dbReference>
<dbReference type="FunFam" id="1.10.10.10:FF:000016">
    <property type="entry name" value="Forkhead box protein I1"/>
    <property type="match status" value="1"/>
</dbReference>
<dbReference type="Gene3D" id="1.10.10.10">
    <property type="entry name" value="Winged helix-like DNA-binding domain superfamily/Winged helix DNA-binding domain"/>
    <property type="match status" value="1"/>
</dbReference>
<dbReference type="InterPro" id="IPR001766">
    <property type="entry name" value="Fork_head_dom"/>
</dbReference>
<dbReference type="InterPro" id="IPR050211">
    <property type="entry name" value="FOX_domain-containing"/>
</dbReference>
<dbReference type="InterPro" id="IPR018122">
    <property type="entry name" value="TF_fork_head_CS_1"/>
</dbReference>
<dbReference type="InterPro" id="IPR030456">
    <property type="entry name" value="TF_fork_head_CS_2"/>
</dbReference>
<dbReference type="InterPro" id="IPR036388">
    <property type="entry name" value="WH-like_DNA-bd_sf"/>
</dbReference>
<dbReference type="InterPro" id="IPR036390">
    <property type="entry name" value="WH_DNA-bd_sf"/>
</dbReference>
<dbReference type="PANTHER" id="PTHR11829">
    <property type="entry name" value="FORKHEAD BOX PROTEIN"/>
    <property type="match status" value="1"/>
</dbReference>
<dbReference type="PANTHER" id="PTHR11829:SF408">
    <property type="entry name" value="FORKHEAD BOX PROTEIN I1"/>
    <property type="match status" value="1"/>
</dbReference>
<dbReference type="Pfam" id="PF00250">
    <property type="entry name" value="Forkhead"/>
    <property type="match status" value="1"/>
</dbReference>
<dbReference type="PRINTS" id="PR00053">
    <property type="entry name" value="FORKHEAD"/>
</dbReference>
<dbReference type="SMART" id="SM00339">
    <property type="entry name" value="FH"/>
    <property type="match status" value="1"/>
</dbReference>
<dbReference type="SUPFAM" id="SSF46785">
    <property type="entry name" value="Winged helix' DNA-binding domain"/>
    <property type="match status" value="1"/>
</dbReference>
<dbReference type="PROSITE" id="PS00657">
    <property type="entry name" value="FORK_HEAD_1"/>
    <property type="match status" value="1"/>
</dbReference>
<dbReference type="PROSITE" id="PS00658">
    <property type="entry name" value="FORK_HEAD_2"/>
    <property type="match status" value="1"/>
</dbReference>
<dbReference type="PROSITE" id="PS50039">
    <property type="entry name" value="FORK_HEAD_3"/>
    <property type="match status" value="1"/>
</dbReference>
<keyword id="KW-0217">Developmental protein</keyword>
<keyword id="KW-0221">Differentiation</keyword>
<keyword id="KW-0238">DNA-binding</keyword>
<keyword id="KW-0524">Neurogenesis</keyword>
<keyword id="KW-0539">Nucleus</keyword>
<keyword id="KW-1185">Reference proteome</keyword>
<keyword id="KW-0804">Transcription</keyword>
<keyword id="KW-0805">Transcription regulation</keyword>
<feature type="chain" id="PRO_0000258003" description="Forkhead box protein I1">
    <location>
        <begin position="1"/>
        <end position="363"/>
    </location>
</feature>
<feature type="DNA-binding region" description="Fork-head" evidence="3">
    <location>
        <begin position="125"/>
        <end position="219"/>
    </location>
</feature>
<feature type="region of interest" description="Disordered" evidence="4">
    <location>
        <begin position="1"/>
        <end position="24"/>
    </location>
</feature>
<feature type="region of interest" description="Disordered" evidence="4">
    <location>
        <begin position="210"/>
        <end position="269"/>
    </location>
</feature>
<feature type="region of interest" description="Disordered" evidence="4">
    <location>
        <begin position="344"/>
        <end position="363"/>
    </location>
</feature>
<feature type="compositionally biased region" description="Low complexity" evidence="4">
    <location>
        <begin position="1"/>
        <end position="18"/>
    </location>
</feature>
<feature type="compositionally biased region" description="Basic and acidic residues" evidence="4">
    <location>
        <begin position="231"/>
        <end position="243"/>
    </location>
</feature>
<feature type="compositionally biased region" description="Low complexity" evidence="4">
    <location>
        <begin position="244"/>
        <end position="258"/>
    </location>
</feature>
<feature type="compositionally biased region" description="Low complexity" evidence="4">
    <location>
        <begin position="347"/>
        <end position="363"/>
    </location>
</feature>
<sequence>MNPVQQPAQQRSPASSLPHPKRAQEAPDMALYCDNFMYPQQSLHPSQRGPNFAIGEYTSPANPYLWLGGHGVNNAPNYSPSPAPYMPPSFGAPQRQFLPNSPAFGGTELSWMSAASQEELLKMVRPPYSYSALIAMAIQHASDRRLTLSQIYQYVAENFPFYKKSKAGWQNSIRHNLSLNDCFKKVPRDENDPGKGNYWTLDPNCEKMFDNGNFRRKRKPKSDANSAKIAKIGEDHLNPKGKESPPMITPSSPEEPSPTGHSKSPSPPAVTYTPCLTNFIGSMTAVDAATANRQGPLGLLNELSQRNISSLSSFISGSAVDQSAEHPDTSLFYNRSPYYSSFPTTAQKQPQFLQQPPLYQGRY</sequence>
<gene>
    <name evidence="7" type="primary">foxi1</name>
    <name type="ORF">TGas064e18.1</name>
</gene>
<proteinExistence type="evidence at transcript level"/>
<accession>Q6P2Z3</accession>